<protein>
    <recommendedName>
        <fullName evidence="1">Translational regulator CsrA</fullName>
    </recommendedName>
    <alternativeName>
        <fullName evidence="1">Carbon storage regulator</fullName>
    </alternativeName>
</protein>
<feature type="chain" id="PRO_1000097496" description="Translational regulator CsrA">
    <location>
        <begin position="1"/>
        <end position="61"/>
    </location>
</feature>
<proteinExistence type="inferred from homology"/>
<organism>
    <name type="scientific">Klebsiella pneumoniae (strain 342)</name>
    <dbReference type="NCBI Taxonomy" id="507522"/>
    <lineage>
        <taxon>Bacteria</taxon>
        <taxon>Pseudomonadati</taxon>
        <taxon>Pseudomonadota</taxon>
        <taxon>Gammaproteobacteria</taxon>
        <taxon>Enterobacterales</taxon>
        <taxon>Enterobacteriaceae</taxon>
        <taxon>Klebsiella/Raoultella group</taxon>
        <taxon>Klebsiella</taxon>
        <taxon>Klebsiella pneumoniae complex</taxon>
    </lineage>
</organism>
<gene>
    <name evidence="1" type="primary">csrA</name>
    <name type="ordered locus">KPK_1099</name>
</gene>
<keyword id="KW-0010">Activator</keyword>
<keyword id="KW-0963">Cytoplasm</keyword>
<keyword id="KW-0678">Repressor</keyword>
<keyword id="KW-0694">RNA-binding</keyword>
<keyword id="KW-0810">Translation regulation</keyword>
<accession>B5XVB9</accession>
<sequence length="61" mass="6856">MLILTRRVGETLMIGDEVTVTVLGVKGNQVRIGVNAPKEVSVHREEIYQRIQAEKSQQSSY</sequence>
<evidence type="ECO:0000255" key="1">
    <source>
        <dbReference type="HAMAP-Rule" id="MF_00167"/>
    </source>
</evidence>
<dbReference type="EMBL" id="CP000964">
    <property type="protein sequence ID" value="ACI11501.1"/>
    <property type="molecule type" value="Genomic_DNA"/>
</dbReference>
<dbReference type="SMR" id="B5XVB9"/>
<dbReference type="KEGG" id="kpe:KPK_1099"/>
<dbReference type="HOGENOM" id="CLU_164837_2_1_6"/>
<dbReference type="Proteomes" id="UP000001734">
    <property type="component" value="Chromosome"/>
</dbReference>
<dbReference type="GO" id="GO:0005829">
    <property type="term" value="C:cytosol"/>
    <property type="evidence" value="ECO:0007669"/>
    <property type="project" value="TreeGrafter"/>
</dbReference>
<dbReference type="GO" id="GO:0048027">
    <property type="term" value="F:mRNA 5'-UTR binding"/>
    <property type="evidence" value="ECO:0007669"/>
    <property type="project" value="UniProtKB-UniRule"/>
</dbReference>
<dbReference type="GO" id="GO:0006402">
    <property type="term" value="P:mRNA catabolic process"/>
    <property type="evidence" value="ECO:0007669"/>
    <property type="project" value="InterPro"/>
</dbReference>
<dbReference type="GO" id="GO:0045947">
    <property type="term" value="P:negative regulation of translational initiation"/>
    <property type="evidence" value="ECO:0007669"/>
    <property type="project" value="UniProtKB-UniRule"/>
</dbReference>
<dbReference type="GO" id="GO:0045948">
    <property type="term" value="P:positive regulation of translational initiation"/>
    <property type="evidence" value="ECO:0007669"/>
    <property type="project" value="UniProtKB-UniRule"/>
</dbReference>
<dbReference type="GO" id="GO:0006109">
    <property type="term" value="P:regulation of carbohydrate metabolic process"/>
    <property type="evidence" value="ECO:0007669"/>
    <property type="project" value="UniProtKB-UniRule"/>
</dbReference>
<dbReference type="FunFam" id="2.60.40.4380:FF:000001">
    <property type="entry name" value="Translational regulator CsrA"/>
    <property type="match status" value="1"/>
</dbReference>
<dbReference type="Gene3D" id="2.60.40.4380">
    <property type="entry name" value="Translational regulator CsrA"/>
    <property type="match status" value="1"/>
</dbReference>
<dbReference type="HAMAP" id="MF_00167">
    <property type="entry name" value="CsrA"/>
    <property type="match status" value="1"/>
</dbReference>
<dbReference type="InterPro" id="IPR003751">
    <property type="entry name" value="CsrA"/>
</dbReference>
<dbReference type="InterPro" id="IPR036107">
    <property type="entry name" value="CsrA_sf"/>
</dbReference>
<dbReference type="NCBIfam" id="TIGR00202">
    <property type="entry name" value="csrA"/>
    <property type="match status" value="1"/>
</dbReference>
<dbReference type="NCBIfam" id="NF002469">
    <property type="entry name" value="PRK01712.1"/>
    <property type="match status" value="1"/>
</dbReference>
<dbReference type="PANTHER" id="PTHR34984">
    <property type="entry name" value="CARBON STORAGE REGULATOR"/>
    <property type="match status" value="1"/>
</dbReference>
<dbReference type="PANTHER" id="PTHR34984:SF1">
    <property type="entry name" value="CARBON STORAGE REGULATOR"/>
    <property type="match status" value="1"/>
</dbReference>
<dbReference type="Pfam" id="PF02599">
    <property type="entry name" value="CsrA"/>
    <property type="match status" value="1"/>
</dbReference>
<dbReference type="SUPFAM" id="SSF117130">
    <property type="entry name" value="CsrA-like"/>
    <property type="match status" value="1"/>
</dbReference>
<reference key="1">
    <citation type="journal article" date="2008" name="PLoS Genet.">
        <title>Complete genome sequence of the N2-fixing broad host range endophyte Klebsiella pneumoniae 342 and virulence predictions verified in mice.</title>
        <authorList>
            <person name="Fouts D.E."/>
            <person name="Tyler H.L."/>
            <person name="DeBoy R.T."/>
            <person name="Daugherty S."/>
            <person name="Ren Q."/>
            <person name="Badger J.H."/>
            <person name="Durkin A.S."/>
            <person name="Huot H."/>
            <person name="Shrivastava S."/>
            <person name="Kothari S."/>
            <person name="Dodson R.J."/>
            <person name="Mohamoud Y."/>
            <person name="Khouri H."/>
            <person name="Roesch L.F.W."/>
            <person name="Krogfelt K.A."/>
            <person name="Struve C."/>
            <person name="Triplett E.W."/>
            <person name="Methe B.A."/>
        </authorList>
    </citation>
    <scope>NUCLEOTIDE SEQUENCE [LARGE SCALE GENOMIC DNA]</scope>
    <source>
        <strain>342</strain>
    </source>
</reference>
<comment type="function">
    <text evidence="1">A key translational regulator that binds mRNA to regulate translation initiation and/or mRNA stability. Mediates global changes in gene expression, shifting from rapid growth to stress survival by linking envelope stress, the stringent response and the catabolite repression systems. Usually binds in the 5'-UTR; binding at or near the Shine-Dalgarno sequence prevents ribosome-binding, repressing translation, binding elsewhere in the 5'-UTR can activate translation and/or stabilize the mRNA. Its function is antagonized by small RNA(s).</text>
</comment>
<comment type="subunit">
    <text evidence="1">Homodimer; the beta-strands of each monomer intercalate to form a hydrophobic core, while the alpha-helices form wings that extend away from the core.</text>
</comment>
<comment type="subcellular location">
    <subcellularLocation>
        <location evidence="1">Cytoplasm</location>
    </subcellularLocation>
</comment>
<comment type="similarity">
    <text evidence="1">Belongs to the CsrA/RsmA family.</text>
</comment>
<name>CSRA_KLEP3</name>